<protein>
    <recommendedName>
        <fullName>Rho GDP-dissociation inhibitor 2</fullName>
        <shortName>Rho GDI 2</shortName>
    </recommendedName>
    <alternativeName>
        <fullName>D4</fullName>
    </alternativeName>
    <alternativeName>
        <fullName>Rho-GDI beta</fullName>
    </alternativeName>
</protein>
<dbReference type="EMBL" id="L07918">
    <property type="protein sequence ID" value="AAA61613.1"/>
    <property type="molecule type" value="mRNA"/>
</dbReference>
<dbReference type="EMBL" id="AK002516">
    <property type="protein sequence ID" value="BAB22155.1"/>
    <property type="molecule type" value="mRNA"/>
</dbReference>
<dbReference type="EMBL" id="AK169733">
    <property type="protein sequence ID" value="BAE41335.1"/>
    <property type="molecule type" value="mRNA"/>
</dbReference>
<dbReference type="EMBL" id="BC031763">
    <property type="protein sequence ID" value="AAH31763.1"/>
    <property type="molecule type" value="mRNA"/>
</dbReference>
<dbReference type="CCDS" id="CCDS20661.1"/>
<dbReference type="PIR" id="I49687">
    <property type="entry name" value="I49687"/>
</dbReference>
<dbReference type="RefSeq" id="NP_001288230.1">
    <property type="nucleotide sequence ID" value="NM_001301301.2"/>
</dbReference>
<dbReference type="RefSeq" id="NP_001288232.1">
    <property type="nucleotide sequence ID" value="NM_001301303.2"/>
</dbReference>
<dbReference type="RefSeq" id="NP_001288234.1">
    <property type="nucleotide sequence ID" value="NM_001301305.2"/>
</dbReference>
<dbReference type="RefSeq" id="NP_001288237.1">
    <property type="nucleotide sequence ID" value="NM_001301308.1"/>
</dbReference>
<dbReference type="RefSeq" id="NP_001288238.1">
    <property type="nucleotide sequence ID" value="NM_001301309.1"/>
</dbReference>
<dbReference type="RefSeq" id="NP_001396419.1">
    <property type="nucleotide sequence ID" value="NM_001409490.1"/>
</dbReference>
<dbReference type="RefSeq" id="NP_001396420.1">
    <property type="nucleotide sequence ID" value="NM_001409491.1"/>
</dbReference>
<dbReference type="RefSeq" id="NP_001396421.1">
    <property type="nucleotide sequence ID" value="NM_001409492.1"/>
</dbReference>
<dbReference type="RefSeq" id="NP_001396422.1">
    <property type="nucleotide sequence ID" value="NM_001409493.1"/>
</dbReference>
<dbReference type="RefSeq" id="NP_001396423.1">
    <property type="nucleotide sequence ID" value="NM_001409494.1"/>
</dbReference>
<dbReference type="RefSeq" id="NP_001396424.1">
    <property type="nucleotide sequence ID" value="NM_001409495.1"/>
</dbReference>
<dbReference type="RefSeq" id="NP_001396426.1">
    <property type="nucleotide sequence ID" value="NM_001409497.1"/>
</dbReference>
<dbReference type="RefSeq" id="NP_001396427.1">
    <property type="nucleotide sequence ID" value="NM_001409498.1"/>
</dbReference>
<dbReference type="RefSeq" id="NP_001396428.1">
    <property type="nucleotide sequence ID" value="NM_001409499.1"/>
</dbReference>
<dbReference type="RefSeq" id="NP_001396429.1">
    <property type="nucleotide sequence ID" value="NM_001409500.1"/>
</dbReference>
<dbReference type="RefSeq" id="NP_031512.1">
    <property type="nucleotide sequence ID" value="NM_007486.6"/>
</dbReference>
<dbReference type="RefSeq" id="XP_006505467.1">
    <property type="nucleotide sequence ID" value="XM_006505404.3"/>
</dbReference>
<dbReference type="RefSeq" id="XP_030110978.1">
    <property type="nucleotide sequence ID" value="XM_030255118.2"/>
</dbReference>
<dbReference type="SMR" id="Q61599"/>
<dbReference type="BioGRID" id="198201">
    <property type="interactions" value="8"/>
</dbReference>
<dbReference type="FunCoup" id="Q61599">
    <property type="interactions" value="1110"/>
</dbReference>
<dbReference type="IntAct" id="Q61599">
    <property type="interactions" value="2"/>
</dbReference>
<dbReference type="STRING" id="10090.ENSMUSP00000032344"/>
<dbReference type="iPTMnet" id="Q61599"/>
<dbReference type="PhosphoSitePlus" id="Q61599"/>
<dbReference type="SwissPalm" id="Q61599"/>
<dbReference type="CPTAC" id="non-CPTAC-3815"/>
<dbReference type="jPOST" id="Q61599"/>
<dbReference type="PaxDb" id="10090-ENSMUSP00000032344"/>
<dbReference type="PeptideAtlas" id="Q61599"/>
<dbReference type="ProteomicsDB" id="266788"/>
<dbReference type="Pumba" id="Q61599"/>
<dbReference type="TopDownProteomics" id="Q61599"/>
<dbReference type="Antibodypedia" id="12089">
    <property type="antibodies" value="529 antibodies from 38 providers"/>
</dbReference>
<dbReference type="DNASU" id="11857"/>
<dbReference type="Ensembl" id="ENSMUST00000032344.12">
    <property type="protein sequence ID" value="ENSMUSP00000032344.6"/>
    <property type="gene ID" value="ENSMUSG00000030220.14"/>
</dbReference>
<dbReference type="Ensembl" id="ENSMUST00000111891.4">
    <property type="protein sequence ID" value="ENSMUSP00000107522.2"/>
    <property type="gene ID" value="ENSMUSG00000030220.14"/>
</dbReference>
<dbReference type="Ensembl" id="ENSMUST00000111892.8">
    <property type="protein sequence ID" value="ENSMUSP00000107523.2"/>
    <property type="gene ID" value="ENSMUSG00000030220.14"/>
</dbReference>
<dbReference type="GeneID" id="11857"/>
<dbReference type="KEGG" id="mmu:11857"/>
<dbReference type="UCSC" id="uc009emo.2">
    <property type="organism name" value="mouse"/>
</dbReference>
<dbReference type="AGR" id="MGI:101940"/>
<dbReference type="CTD" id="397"/>
<dbReference type="MGI" id="MGI:101940">
    <property type="gene designation" value="Arhgdib"/>
</dbReference>
<dbReference type="VEuPathDB" id="HostDB:ENSMUSG00000030220"/>
<dbReference type="eggNOG" id="KOG3205">
    <property type="taxonomic scope" value="Eukaryota"/>
</dbReference>
<dbReference type="GeneTree" id="ENSGT00390000006233"/>
<dbReference type="HOGENOM" id="CLU_076228_1_1_1"/>
<dbReference type="InParanoid" id="Q61599"/>
<dbReference type="OMA" id="YKPTAAK"/>
<dbReference type="OrthoDB" id="1683373at2759"/>
<dbReference type="PhylomeDB" id="Q61599"/>
<dbReference type="TreeFam" id="TF105387"/>
<dbReference type="Reactome" id="R-MMU-8980692">
    <property type="pathway name" value="RHOA GTPase cycle"/>
</dbReference>
<dbReference type="Reactome" id="R-MMU-9013148">
    <property type="pathway name" value="CDC42 GTPase cycle"/>
</dbReference>
<dbReference type="Reactome" id="R-MMU-9013149">
    <property type="pathway name" value="RAC1 GTPase cycle"/>
</dbReference>
<dbReference type="Reactome" id="R-MMU-9013407">
    <property type="pathway name" value="RHOH GTPase cycle"/>
</dbReference>
<dbReference type="Reactome" id="R-MMU-9013408">
    <property type="pathway name" value="RHOG GTPase cycle"/>
</dbReference>
<dbReference type="Reactome" id="R-MMU-9013423">
    <property type="pathway name" value="RAC3 GTPase cycle"/>
</dbReference>
<dbReference type="BioGRID-ORCS" id="11857">
    <property type="hits" value="0 hits in 81 CRISPR screens"/>
</dbReference>
<dbReference type="ChiTaRS" id="Arhgdib">
    <property type="organism name" value="mouse"/>
</dbReference>
<dbReference type="PRO" id="PR:Q61599"/>
<dbReference type="Proteomes" id="UP000000589">
    <property type="component" value="Chromosome 6"/>
</dbReference>
<dbReference type="RNAct" id="Q61599">
    <property type="molecule type" value="protein"/>
</dbReference>
<dbReference type="Bgee" id="ENSMUSG00000030220">
    <property type="expression patterns" value="Expressed in granulocyte and 193 other cell types or tissues"/>
</dbReference>
<dbReference type="ExpressionAtlas" id="Q61599">
    <property type="expression patterns" value="baseline and differential"/>
</dbReference>
<dbReference type="GO" id="GO:0005829">
    <property type="term" value="C:cytosol"/>
    <property type="evidence" value="ECO:0000250"/>
    <property type="project" value="UniProtKB"/>
</dbReference>
<dbReference type="GO" id="GO:0005096">
    <property type="term" value="F:GTPase activator activity"/>
    <property type="evidence" value="ECO:0007669"/>
    <property type="project" value="UniProtKB-KW"/>
</dbReference>
<dbReference type="GO" id="GO:0003924">
    <property type="term" value="F:GTPase activity"/>
    <property type="evidence" value="ECO:0007669"/>
    <property type="project" value="Ensembl"/>
</dbReference>
<dbReference type="GO" id="GO:0005094">
    <property type="term" value="F:Rho GDP-dissociation inhibitor activity"/>
    <property type="evidence" value="ECO:0000250"/>
    <property type="project" value="UniProtKB"/>
</dbReference>
<dbReference type="GO" id="GO:0031267">
    <property type="term" value="F:small GTPase binding"/>
    <property type="evidence" value="ECO:0000250"/>
    <property type="project" value="UniProtKB"/>
</dbReference>
<dbReference type="GO" id="GO:1901164">
    <property type="term" value="P:negative regulation of trophoblast cell migration"/>
    <property type="evidence" value="ECO:0007669"/>
    <property type="project" value="Ensembl"/>
</dbReference>
<dbReference type="GO" id="GO:0035023">
    <property type="term" value="P:regulation of Rho protein signal transduction"/>
    <property type="evidence" value="ECO:0000250"/>
    <property type="project" value="UniProtKB"/>
</dbReference>
<dbReference type="GO" id="GO:0007266">
    <property type="term" value="P:Rho protein signal transduction"/>
    <property type="evidence" value="ECO:0007669"/>
    <property type="project" value="InterPro"/>
</dbReference>
<dbReference type="FunFam" id="2.70.50.30:FF:000004">
    <property type="entry name" value="Rho GDP-dissociation inhibitor 1"/>
    <property type="match status" value="1"/>
</dbReference>
<dbReference type="Gene3D" id="2.70.50.30">
    <property type="entry name" value="Coagulation Factor XIII, subunit A, domain 1"/>
    <property type="match status" value="1"/>
</dbReference>
<dbReference type="InterPro" id="IPR014756">
    <property type="entry name" value="Ig_E-set"/>
</dbReference>
<dbReference type="InterPro" id="IPR000406">
    <property type="entry name" value="Rho_GDI"/>
</dbReference>
<dbReference type="InterPro" id="IPR024792">
    <property type="entry name" value="RhoGDI_dom_sf"/>
</dbReference>
<dbReference type="PANTHER" id="PTHR10980">
    <property type="entry name" value="RHO GDP-DISSOCIATION INHIBITOR"/>
    <property type="match status" value="1"/>
</dbReference>
<dbReference type="PANTHER" id="PTHR10980:SF15">
    <property type="entry name" value="RHO GDP-DISSOCIATION INHIBITOR 2"/>
    <property type="match status" value="1"/>
</dbReference>
<dbReference type="Pfam" id="PF02115">
    <property type="entry name" value="Rho_GDI"/>
    <property type="match status" value="1"/>
</dbReference>
<dbReference type="PRINTS" id="PR00492">
    <property type="entry name" value="RHOGDI"/>
</dbReference>
<dbReference type="SUPFAM" id="SSF81296">
    <property type="entry name" value="E set domains"/>
    <property type="match status" value="1"/>
</dbReference>
<reference key="1">
    <citation type="journal article" date="1993" name="Genes Chromosomes Cancer">
        <title>Identification of a novel protein with GDP dissociation inhibitor activity for the ras-like proteins CDC42Hs and rac I.</title>
        <authorList>
            <person name="Adra C.N."/>
            <person name="Ko J."/>
            <person name="Leonard D."/>
            <person name="Wirth L.J."/>
            <person name="Cerione R.A."/>
            <person name="Lim B."/>
        </authorList>
    </citation>
    <scope>NUCLEOTIDE SEQUENCE [MRNA]</scope>
    <scope>TISSUE SPECIFICITY</scope>
    <source>
        <strain>NIH Swiss</strain>
    </source>
</reference>
<reference key="2">
    <citation type="journal article" date="2005" name="Science">
        <title>The transcriptional landscape of the mammalian genome.</title>
        <authorList>
            <person name="Carninci P."/>
            <person name="Kasukawa T."/>
            <person name="Katayama S."/>
            <person name="Gough J."/>
            <person name="Frith M.C."/>
            <person name="Maeda N."/>
            <person name="Oyama R."/>
            <person name="Ravasi T."/>
            <person name="Lenhard B."/>
            <person name="Wells C."/>
            <person name="Kodzius R."/>
            <person name="Shimokawa K."/>
            <person name="Bajic V.B."/>
            <person name="Brenner S.E."/>
            <person name="Batalov S."/>
            <person name="Forrest A.R."/>
            <person name="Zavolan M."/>
            <person name="Davis M.J."/>
            <person name="Wilming L.G."/>
            <person name="Aidinis V."/>
            <person name="Allen J.E."/>
            <person name="Ambesi-Impiombato A."/>
            <person name="Apweiler R."/>
            <person name="Aturaliya R.N."/>
            <person name="Bailey T.L."/>
            <person name="Bansal M."/>
            <person name="Baxter L."/>
            <person name="Beisel K.W."/>
            <person name="Bersano T."/>
            <person name="Bono H."/>
            <person name="Chalk A.M."/>
            <person name="Chiu K.P."/>
            <person name="Choudhary V."/>
            <person name="Christoffels A."/>
            <person name="Clutterbuck D.R."/>
            <person name="Crowe M.L."/>
            <person name="Dalla E."/>
            <person name="Dalrymple B.P."/>
            <person name="de Bono B."/>
            <person name="Della Gatta G."/>
            <person name="di Bernardo D."/>
            <person name="Down T."/>
            <person name="Engstrom P."/>
            <person name="Fagiolini M."/>
            <person name="Faulkner G."/>
            <person name="Fletcher C.F."/>
            <person name="Fukushima T."/>
            <person name="Furuno M."/>
            <person name="Futaki S."/>
            <person name="Gariboldi M."/>
            <person name="Georgii-Hemming P."/>
            <person name="Gingeras T.R."/>
            <person name="Gojobori T."/>
            <person name="Green R.E."/>
            <person name="Gustincich S."/>
            <person name="Harbers M."/>
            <person name="Hayashi Y."/>
            <person name="Hensch T.K."/>
            <person name="Hirokawa N."/>
            <person name="Hill D."/>
            <person name="Huminiecki L."/>
            <person name="Iacono M."/>
            <person name="Ikeo K."/>
            <person name="Iwama A."/>
            <person name="Ishikawa T."/>
            <person name="Jakt M."/>
            <person name="Kanapin A."/>
            <person name="Katoh M."/>
            <person name="Kawasawa Y."/>
            <person name="Kelso J."/>
            <person name="Kitamura H."/>
            <person name="Kitano H."/>
            <person name="Kollias G."/>
            <person name="Krishnan S.P."/>
            <person name="Kruger A."/>
            <person name="Kummerfeld S.K."/>
            <person name="Kurochkin I.V."/>
            <person name="Lareau L.F."/>
            <person name="Lazarevic D."/>
            <person name="Lipovich L."/>
            <person name="Liu J."/>
            <person name="Liuni S."/>
            <person name="McWilliam S."/>
            <person name="Madan Babu M."/>
            <person name="Madera M."/>
            <person name="Marchionni L."/>
            <person name="Matsuda H."/>
            <person name="Matsuzawa S."/>
            <person name="Miki H."/>
            <person name="Mignone F."/>
            <person name="Miyake S."/>
            <person name="Morris K."/>
            <person name="Mottagui-Tabar S."/>
            <person name="Mulder N."/>
            <person name="Nakano N."/>
            <person name="Nakauchi H."/>
            <person name="Ng P."/>
            <person name="Nilsson R."/>
            <person name="Nishiguchi S."/>
            <person name="Nishikawa S."/>
            <person name="Nori F."/>
            <person name="Ohara O."/>
            <person name="Okazaki Y."/>
            <person name="Orlando V."/>
            <person name="Pang K.C."/>
            <person name="Pavan W.J."/>
            <person name="Pavesi G."/>
            <person name="Pesole G."/>
            <person name="Petrovsky N."/>
            <person name="Piazza S."/>
            <person name="Reed J."/>
            <person name="Reid J.F."/>
            <person name="Ring B.Z."/>
            <person name="Ringwald M."/>
            <person name="Rost B."/>
            <person name="Ruan Y."/>
            <person name="Salzberg S.L."/>
            <person name="Sandelin A."/>
            <person name="Schneider C."/>
            <person name="Schoenbach C."/>
            <person name="Sekiguchi K."/>
            <person name="Semple C.A."/>
            <person name="Seno S."/>
            <person name="Sessa L."/>
            <person name="Sheng Y."/>
            <person name="Shibata Y."/>
            <person name="Shimada H."/>
            <person name="Shimada K."/>
            <person name="Silva D."/>
            <person name="Sinclair B."/>
            <person name="Sperling S."/>
            <person name="Stupka E."/>
            <person name="Sugiura K."/>
            <person name="Sultana R."/>
            <person name="Takenaka Y."/>
            <person name="Taki K."/>
            <person name="Tammoja K."/>
            <person name="Tan S.L."/>
            <person name="Tang S."/>
            <person name="Taylor M.S."/>
            <person name="Tegner J."/>
            <person name="Teichmann S.A."/>
            <person name="Ueda H.R."/>
            <person name="van Nimwegen E."/>
            <person name="Verardo R."/>
            <person name="Wei C.L."/>
            <person name="Yagi K."/>
            <person name="Yamanishi H."/>
            <person name="Zabarovsky E."/>
            <person name="Zhu S."/>
            <person name="Zimmer A."/>
            <person name="Hide W."/>
            <person name="Bult C."/>
            <person name="Grimmond S.M."/>
            <person name="Teasdale R.D."/>
            <person name="Liu E.T."/>
            <person name="Brusic V."/>
            <person name="Quackenbush J."/>
            <person name="Wahlestedt C."/>
            <person name="Mattick J.S."/>
            <person name="Hume D.A."/>
            <person name="Kai C."/>
            <person name="Sasaki D."/>
            <person name="Tomaru Y."/>
            <person name="Fukuda S."/>
            <person name="Kanamori-Katayama M."/>
            <person name="Suzuki M."/>
            <person name="Aoki J."/>
            <person name="Arakawa T."/>
            <person name="Iida J."/>
            <person name="Imamura K."/>
            <person name="Itoh M."/>
            <person name="Kato T."/>
            <person name="Kawaji H."/>
            <person name="Kawagashira N."/>
            <person name="Kawashima T."/>
            <person name="Kojima M."/>
            <person name="Kondo S."/>
            <person name="Konno H."/>
            <person name="Nakano K."/>
            <person name="Ninomiya N."/>
            <person name="Nishio T."/>
            <person name="Okada M."/>
            <person name="Plessy C."/>
            <person name="Shibata K."/>
            <person name="Shiraki T."/>
            <person name="Suzuki S."/>
            <person name="Tagami M."/>
            <person name="Waki K."/>
            <person name="Watahiki A."/>
            <person name="Okamura-Oho Y."/>
            <person name="Suzuki H."/>
            <person name="Kawai J."/>
            <person name="Hayashizaki Y."/>
        </authorList>
    </citation>
    <scope>NUCLEOTIDE SEQUENCE [LARGE SCALE MRNA]</scope>
    <source>
        <strain>C57BL/6J</strain>
        <strain>NOD</strain>
        <tissue>Kidney</tissue>
        <tissue>Thymus</tissue>
    </source>
</reference>
<reference key="3">
    <citation type="journal article" date="2004" name="Genome Res.">
        <title>The status, quality, and expansion of the NIH full-length cDNA project: the Mammalian Gene Collection (MGC).</title>
        <authorList>
            <consortium name="The MGC Project Team"/>
        </authorList>
    </citation>
    <scope>NUCLEOTIDE SEQUENCE [LARGE SCALE MRNA]</scope>
    <source>
        <strain>FVB/N</strain>
        <tissue>Salivary gland</tissue>
    </source>
</reference>
<reference key="4">
    <citation type="journal article" date="2010" name="Cell">
        <title>A tissue-specific atlas of mouse protein phosphorylation and expression.</title>
        <authorList>
            <person name="Huttlin E.L."/>
            <person name="Jedrychowski M.P."/>
            <person name="Elias J.E."/>
            <person name="Goswami T."/>
            <person name="Rad R."/>
            <person name="Beausoleil S.A."/>
            <person name="Villen J."/>
            <person name="Haas W."/>
            <person name="Sowa M.E."/>
            <person name="Gygi S.P."/>
        </authorList>
    </citation>
    <scope>IDENTIFICATION BY MASS SPECTROMETRY [LARGE SCALE ANALYSIS]</scope>
    <source>
        <tissue>Brain</tissue>
        <tissue>Brown adipose tissue</tissue>
        <tissue>Heart</tissue>
        <tissue>Kidney</tissue>
        <tissue>Liver</tissue>
        <tissue>Lung</tissue>
        <tissue>Pancreas</tissue>
        <tissue>Spleen</tissue>
        <tissue>Testis</tissue>
    </source>
</reference>
<sequence length="200" mass="22851">MTEKDAQPQLEEADDDLDSKLNYKPPPQKSLKELQEMDKDDESLTKYKKTLLGDVPVVADPTVPNVTVTRLSLVCDSAPGPITMDLTGDLEALKKDTFVLKEGIEYRVKINFKVNKDIVSGLKYVQHTYRTGMRVDKATFMVGSYGPRPEEYEFLTPVEEAPKGMLARGTYHNKSFFTDDDKQDHLTWEWNLAIKKDWTE</sequence>
<keyword id="KW-0007">Acetylation</keyword>
<keyword id="KW-0963">Cytoplasm</keyword>
<keyword id="KW-0343">GTPase activation</keyword>
<keyword id="KW-0597">Phosphoprotein</keyword>
<keyword id="KW-1185">Reference proteome</keyword>
<accession>Q61599</accession>
<accession>Q3TEB3</accession>
<gene>
    <name type="primary">Arhgdib</name>
    <name type="synonym">Gdid4</name>
</gene>
<comment type="function">
    <text evidence="1">Regulates the GDP/GTP exchange reaction of the Rho proteins by inhibiting the dissociation of GDP from them, and the subsequent binding of GTP to them. Regulates reorganization of the actin cytoskeleton mediated by Rho family members.</text>
</comment>
<comment type="subunit">
    <text evidence="1">Interacts with RHOA. Interacts with RAC1. Interacts with RAC2. Interacts with CDC42.</text>
</comment>
<comment type="subcellular location">
    <subcellularLocation>
        <location evidence="1">Cytoplasm</location>
        <location evidence="1">Cytosol</location>
    </subcellularLocation>
</comment>
<comment type="tissue specificity">
    <text evidence="3">Preferentially expressed in hematopoietic cells.</text>
</comment>
<comment type="similarity">
    <text evidence="4">Belongs to the Rho GDI family.</text>
</comment>
<proteinExistence type="evidence at protein level"/>
<organism>
    <name type="scientific">Mus musculus</name>
    <name type="common">Mouse</name>
    <dbReference type="NCBI Taxonomy" id="10090"/>
    <lineage>
        <taxon>Eukaryota</taxon>
        <taxon>Metazoa</taxon>
        <taxon>Chordata</taxon>
        <taxon>Craniata</taxon>
        <taxon>Vertebrata</taxon>
        <taxon>Euteleostomi</taxon>
        <taxon>Mammalia</taxon>
        <taxon>Eutheria</taxon>
        <taxon>Euarchontoglires</taxon>
        <taxon>Glires</taxon>
        <taxon>Rodentia</taxon>
        <taxon>Myomorpha</taxon>
        <taxon>Muroidea</taxon>
        <taxon>Muridae</taxon>
        <taxon>Murinae</taxon>
        <taxon>Mus</taxon>
        <taxon>Mus</taxon>
    </lineage>
</organism>
<name>GDIR2_MOUSE</name>
<evidence type="ECO:0000250" key="1">
    <source>
        <dbReference type="UniProtKB" id="P52566"/>
    </source>
</evidence>
<evidence type="ECO:0000256" key="2">
    <source>
        <dbReference type="SAM" id="MobiDB-lite"/>
    </source>
</evidence>
<evidence type="ECO:0000269" key="3">
    <source>
    </source>
</evidence>
<evidence type="ECO:0000305" key="4"/>
<feature type="initiator methionine" description="Removed" evidence="1">
    <location>
        <position position="1"/>
    </location>
</feature>
<feature type="chain" id="PRO_0000219017" description="Rho GDP-dissociation inhibitor 2">
    <location>
        <begin position="2"/>
        <end position="200"/>
    </location>
</feature>
<feature type="region of interest" description="Disordered" evidence="2">
    <location>
        <begin position="1"/>
        <end position="39"/>
    </location>
</feature>
<feature type="compositionally biased region" description="Basic and acidic residues" evidence="2">
    <location>
        <begin position="30"/>
        <end position="39"/>
    </location>
</feature>
<feature type="modified residue" description="N-acetylthreonine" evidence="1">
    <location>
        <position position="2"/>
    </location>
</feature>
<feature type="modified residue" description="N6-acetyllysine" evidence="1">
    <location>
        <position position="20"/>
    </location>
</feature>
<feature type="modified residue" description="Phosphotyrosine" evidence="1">
    <location>
        <position position="23"/>
    </location>
</feature>
<feature type="modified residue" description="N6-acetyllysine" evidence="1">
    <location>
        <position position="24"/>
    </location>
</feature>
<feature type="modified residue" description="N6-acetyllysine" evidence="1">
    <location>
        <position position="39"/>
    </location>
</feature>
<feature type="modified residue" description="N6-acetyllysine" evidence="1">
    <location>
        <position position="46"/>
    </location>
</feature>
<feature type="modified residue" description="N6-acetyllysine" evidence="1">
    <location>
        <position position="101"/>
    </location>
</feature>
<feature type="modified residue" description="N6-acetyllysine" evidence="1">
    <location>
        <position position="123"/>
    </location>
</feature>
<feature type="modified residue" description="Phosphoserine" evidence="1">
    <location>
        <position position="144"/>
    </location>
</feature>
<feature type="modified residue" description="N6-acetyllysine" evidence="1">
    <location>
        <position position="174"/>
    </location>
</feature>